<feature type="chain" id="PRO_0000410655" description="Biogenesis of lysosome-related organelles complex 1 subunit CNL1">
    <location>
        <begin position="1"/>
        <end position="108"/>
    </location>
</feature>
<reference key="1">
    <citation type="journal article" date="2009" name="Genome Res.">
        <title>Comparative genomics of protoploid Saccharomycetaceae.</title>
        <authorList>
            <consortium name="The Genolevures Consortium"/>
            <person name="Souciet J.-L."/>
            <person name="Dujon B."/>
            <person name="Gaillardin C."/>
            <person name="Johnston M."/>
            <person name="Baret P.V."/>
            <person name="Cliften P."/>
            <person name="Sherman D.J."/>
            <person name="Weissenbach J."/>
            <person name="Westhof E."/>
            <person name="Wincker P."/>
            <person name="Jubin C."/>
            <person name="Poulain J."/>
            <person name="Barbe V."/>
            <person name="Segurens B."/>
            <person name="Artiguenave F."/>
            <person name="Anthouard V."/>
            <person name="Vacherie B."/>
            <person name="Val M.-E."/>
            <person name="Fulton R.S."/>
            <person name="Minx P."/>
            <person name="Wilson R."/>
            <person name="Durrens P."/>
            <person name="Jean G."/>
            <person name="Marck C."/>
            <person name="Martin T."/>
            <person name="Nikolski M."/>
            <person name="Rolland T."/>
            <person name="Seret M.-L."/>
            <person name="Casaregola S."/>
            <person name="Despons L."/>
            <person name="Fairhead C."/>
            <person name="Fischer G."/>
            <person name="Lafontaine I."/>
            <person name="Leh V."/>
            <person name="Lemaire M."/>
            <person name="de Montigny J."/>
            <person name="Neuveglise C."/>
            <person name="Thierry A."/>
            <person name="Blanc-Lenfle I."/>
            <person name="Bleykasten C."/>
            <person name="Diffels J."/>
            <person name="Fritsch E."/>
            <person name="Frangeul L."/>
            <person name="Goeffon A."/>
            <person name="Jauniaux N."/>
            <person name="Kachouri-Lafond R."/>
            <person name="Payen C."/>
            <person name="Potier S."/>
            <person name="Pribylova L."/>
            <person name="Ozanne C."/>
            <person name="Richard G.-F."/>
            <person name="Sacerdot C."/>
            <person name="Straub M.-L."/>
            <person name="Talla E."/>
        </authorList>
    </citation>
    <scope>NUCLEOTIDE SEQUENCE [LARGE SCALE GENOMIC DNA]</scope>
    <source>
        <strain>ATCC 2623 / CBS 732 / BCRC 21506 / NBRC 1130 / NCYC 568 / NRRL Y-229</strain>
    </source>
</reference>
<proteinExistence type="inferred from homology"/>
<sequence>MSQESNDDSLGIDKLSVDYDYLLYKIADYVSSIEFQTNQICKRQNELITKDIVNGIVDENIKHFREILTKCEKLENYFDMLDQINMITENFKTRLAQVARDYKELQKP</sequence>
<evidence type="ECO:0000250" key="1"/>
<evidence type="ECO:0000305" key="2"/>
<keyword id="KW-0963">Cytoplasm</keyword>
<keyword id="KW-1185">Reference proteome</keyword>
<keyword id="KW-0813">Transport</keyword>
<dbReference type="EMBL" id="CU928178">
    <property type="protein sequence ID" value="CAR28681.1"/>
    <property type="molecule type" value="Genomic_DNA"/>
</dbReference>
<dbReference type="RefSeq" id="XP_002497614.1">
    <property type="nucleotide sequence ID" value="XM_002497569.1"/>
</dbReference>
<dbReference type="SMR" id="C5DY20"/>
<dbReference type="FunCoup" id="C5DY20">
    <property type="interactions" value="38"/>
</dbReference>
<dbReference type="STRING" id="559307.C5DY20"/>
<dbReference type="GeneID" id="8205378"/>
<dbReference type="KEGG" id="zro:ZYRO0F09592g"/>
<dbReference type="HOGENOM" id="CLU_141728_1_0_1"/>
<dbReference type="InParanoid" id="C5DY20"/>
<dbReference type="Proteomes" id="UP000008536">
    <property type="component" value="Chromosome F"/>
</dbReference>
<dbReference type="GO" id="GO:0031083">
    <property type="term" value="C:BLOC-1 complex"/>
    <property type="evidence" value="ECO:0007669"/>
    <property type="project" value="InterPro"/>
</dbReference>
<dbReference type="GO" id="GO:0005737">
    <property type="term" value="C:cytoplasm"/>
    <property type="evidence" value="ECO:0007669"/>
    <property type="project" value="UniProtKB-SubCell"/>
</dbReference>
<dbReference type="GO" id="GO:0007032">
    <property type="term" value="P:endosome organization"/>
    <property type="evidence" value="ECO:0007669"/>
    <property type="project" value="TreeGrafter"/>
</dbReference>
<dbReference type="CDD" id="cd24144">
    <property type="entry name" value="BLOC1_CNL1"/>
    <property type="match status" value="1"/>
</dbReference>
<dbReference type="InterPro" id="IPR034455">
    <property type="entry name" value="CNL1"/>
</dbReference>
<dbReference type="PANTHER" id="PTHR39145">
    <property type="entry name" value="BIOGENESIS OF LYSOSOME-RELATED ORGANELLES COMPLEX 1 SUBUNIT CNL1"/>
    <property type="match status" value="1"/>
</dbReference>
<dbReference type="PANTHER" id="PTHR39145:SF1">
    <property type="entry name" value="BIOGENESIS OF LYSOSOME-RELATED ORGANELLES COMPLEX 1 SUBUNIT CNL1"/>
    <property type="match status" value="1"/>
</dbReference>
<protein>
    <recommendedName>
        <fullName>Biogenesis of lysosome-related organelles complex 1 subunit CNL1</fullName>
        <shortName>BLOC-1 subunit CNL1</shortName>
    </recommendedName>
    <alternativeName>
        <fullName>CNO-like protein 1</fullName>
    </alternativeName>
</protein>
<gene>
    <name type="primary">CLN1</name>
    <name type="ordered locus">ZYRO0F09592g</name>
</gene>
<name>BL1S4_ZYGRC</name>
<organism>
    <name type="scientific">Zygosaccharomyces rouxii (strain ATCC 2623 / CBS 732 / NBRC 1130 / NCYC 568 / NRRL Y-229)</name>
    <dbReference type="NCBI Taxonomy" id="559307"/>
    <lineage>
        <taxon>Eukaryota</taxon>
        <taxon>Fungi</taxon>
        <taxon>Dikarya</taxon>
        <taxon>Ascomycota</taxon>
        <taxon>Saccharomycotina</taxon>
        <taxon>Saccharomycetes</taxon>
        <taxon>Saccharomycetales</taxon>
        <taxon>Saccharomycetaceae</taxon>
        <taxon>Zygosaccharomyces</taxon>
    </lineage>
</organism>
<comment type="function">
    <text evidence="1">Component of the biogenesis of lysosome-related organelles complex-1 (BLOC-1), a complex that is involved in endosomal cargo sorting.</text>
</comment>
<comment type="subunit">
    <text evidence="1">Component of the biogenesis of lysosome-related organelles complex-1 (BLOC-1).</text>
</comment>
<comment type="subcellular location">
    <subcellularLocation>
        <location evidence="1">Cytoplasm</location>
    </subcellularLocation>
    <text evidence="1">Punctate pattern.</text>
</comment>
<comment type="similarity">
    <text evidence="2">Belongs to the BLOC1S4 family.</text>
</comment>
<accession>C5DY20</accession>